<reference key="1">
    <citation type="journal article" date="2005" name="Nucleic Acids Res.">
        <title>The genome sequence of Xanthomonas oryzae pathovar oryzae KACC10331, the bacterial blight pathogen of rice.</title>
        <authorList>
            <person name="Lee B.-M."/>
            <person name="Park Y.-J."/>
            <person name="Park D.-S."/>
            <person name="Kang H.-W."/>
            <person name="Kim J.-G."/>
            <person name="Song E.-S."/>
            <person name="Park I.-C."/>
            <person name="Yoon U.-H."/>
            <person name="Hahn J.-H."/>
            <person name="Koo B.-S."/>
            <person name="Lee G.-B."/>
            <person name="Kim H."/>
            <person name="Park H.-S."/>
            <person name="Yoon K.-O."/>
            <person name="Kim J.-H."/>
            <person name="Jung C.-H."/>
            <person name="Koh N.-H."/>
            <person name="Seo J.-S."/>
            <person name="Go S.-J."/>
        </authorList>
    </citation>
    <scope>NUCLEOTIDE SEQUENCE [LARGE SCALE GENOMIC DNA]</scope>
    <source>
        <strain>KACC10331 / KXO85</strain>
    </source>
</reference>
<comment type="function">
    <text evidence="1">Specifically methylates position 2 of adenine 2503 in 23S rRNA and position 2 of adenine 37 in tRNAs. m2A2503 modification seems to play a crucial role in the proofreading step occurring at the peptidyl transferase center and thus would serve to optimize ribosomal fidelity.</text>
</comment>
<comment type="catalytic activity">
    <reaction evidence="1">
        <text>adenosine(2503) in 23S rRNA + 2 reduced [2Fe-2S]-[ferredoxin] + 2 S-adenosyl-L-methionine = 2-methyladenosine(2503) in 23S rRNA + 5'-deoxyadenosine + L-methionine + 2 oxidized [2Fe-2S]-[ferredoxin] + S-adenosyl-L-homocysteine</text>
        <dbReference type="Rhea" id="RHEA:42916"/>
        <dbReference type="Rhea" id="RHEA-COMP:10000"/>
        <dbReference type="Rhea" id="RHEA-COMP:10001"/>
        <dbReference type="Rhea" id="RHEA-COMP:10152"/>
        <dbReference type="Rhea" id="RHEA-COMP:10282"/>
        <dbReference type="ChEBI" id="CHEBI:17319"/>
        <dbReference type="ChEBI" id="CHEBI:33737"/>
        <dbReference type="ChEBI" id="CHEBI:33738"/>
        <dbReference type="ChEBI" id="CHEBI:57844"/>
        <dbReference type="ChEBI" id="CHEBI:57856"/>
        <dbReference type="ChEBI" id="CHEBI:59789"/>
        <dbReference type="ChEBI" id="CHEBI:74411"/>
        <dbReference type="ChEBI" id="CHEBI:74497"/>
        <dbReference type="EC" id="2.1.1.192"/>
    </reaction>
</comment>
<comment type="catalytic activity">
    <reaction evidence="1">
        <text>adenosine(37) in tRNA + 2 reduced [2Fe-2S]-[ferredoxin] + 2 S-adenosyl-L-methionine = 2-methyladenosine(37) in tRNA + 5'-deoxyadenosine + L-methionine + 2 oxidized [2Fe-2S]-[ferredoxin] + S-adenosyl-L-homocysteine</text>
        <dbReference type="Rhea" id="RHEA:43332"/>
        <dbReference type="Rhea" id="RHEA-COMP:10000"/>
        <dbReference type="Rhea" id="RHEA-COMP:10001"/>
        <dbReference type="Rhea" id="RHEA-COMP:10162"/>
        <dbReference type="Rhea" id="RHEA-COMP:10485"/>
        <dbReference type="ChEBI" id="CHEBI:17319"/>
        <dbReference type="ChEBI" id="CHEBI:33737"/>
        <dbReference type="ChEBI" id="CHEBI:33738"/>
        <dbReference type="ChEBI" id="CHEBI:57844"/>
        <dbReference type="ChEBI" id="CHEBI:57856"/>
        <dbReference type="ChEBI" id="CHEBI:59789"/>
        <dbReference type="ChEBI" id="CHEBI:74411"/>
        <dbReference type="ChEBI" id="CHEBI:74497"/>
        <dbReference type="EC" id="2.1.1.192"/>
    </reaction>
</comment>
<comment type="cofactor">
    <cofactor evidence="1">
        <name>[4Fe-4S] cluster</name>
        <dbReference type="ChEBI" id="CHEBI:49883"/>
    </cofactor>
    <text evidence="1">Binds 1 [4Fe-4S] cluster. The cluster is coordinated with 3 cysteines and an exchangeable S-adenosyl-L-methionine.</text>
</comment>
<comment type="subcellular location">
    <subcellularLocation>
        <location evidence="1">Cytoplasm</location>
    </subcellularLocation>
</comment>
<comment type="miscellaneous">
    <text evidence="1">Reaction proceeds by a ping-pong mechanism involving intermediate methylation of a conserved cysteine residue.</text>
</comment>
<comment type="similarity">
    <text evidence="1">Belongs to the radical SAM superfamily. RlmN family.</text>
</comment>
<dbReference type="EC" id="2.1.1.192" evidence="1"/>
<dbReference type="EMBL" id="AE013598">
    <property type="protein sequence ID" value="AAW75788.1"/>
    <property type="molecule type" value="Genomic_DNA"/>
</dbReference>
<dbReference type="SMR" id="Q5GZT3"/>
<dbReference type="STRING" id="291331.XOO2534"/>
<dbReference type="KEGG" id="xoo:XOO2534"/>
<dbReference type="HOGENOM" id="CLU_029101_0_0_6"/>
<dbReference type="Proteomes" id="UP000006735">
    <property type="component" value="Chromosome"/>
</dbReference>
<dbReference type="GO" id="GO:0005737">
    <property type="term" value="C:cytoplasm"/>
    <property type="evidence" value="ECO:0007669"/>
    <property type="project" value="UniProtKB-SubCell"/>
</dbReference>
<dbReference type="GO" id="GO:0051539">
    <property type="term" value="F:4 iron, 4 sulfur cluster binding"/>
    <property type="evidence" value="ECO:0007669"/>
    <property type="project" value="UniProtKB-UniRule"/>
</dbReference>
<dbReference type="GO" id="GO:0046872">
    <property type="term" value="F:metal ion binding"/>
    <property type="evidence" value="ECO:0007669"/>
    <property type="project" value="UniProtKB-KW"/>
</dbReference>
<dbReference type="GO" id="GO:0070040">
    <property type="term" value="F:rRNA (adenine(2503)-C2-)-methyltransferase activity"/>
    <property type="evidence" value="ECO:0007669"/>
    <property type="project" value="UniProtKB-UniRule"/>
</dbReference>
<dbReference type="GO" id="GO:0019843">
    <property type="term" value="F:rRNA binding"/>
    <property type="evidence" value="ECO:0007669"/>
    <property type="project" value="UniProtKB-UniRule"/>
</dbReference>
<dbReference type="GO" id="GO:0002935">
    <property type="term" value="F:tRNA (adenine(37)-C2)-methyltransferase activity"/>
    <property type="evidence" value="ECO:0007669"/>
    <property type="project" value="UniProtKB-UniRule"/>
</dbReference>
<dbReference type="GO" id="GO:0000049">
    <property type="term" value="F:tRNA binding"/>
    <property type="evidence" value="ECO:0007669"/>
    <property type="project" value="UniProtKB-UniRule"/>
</dbReference>
<dbReference type="GO" id="GO:0070475">
    <property type="term" value="P:rRNA base methylation"/>
    <property type="evidence" value="ECO:0007669"/>
    <property type="project" value="UniProtKB-UniRule"/>
</dbReference>
<dbReference type="GO" id="GO:0030488">
    <property type="term" value="P:tRNA methylation"/>
    <property type="evidence" value="ECO:0007669"/>
    <property type="project" value="UniProtKB-UniRule"/>
</dbReference>
<dbReference type="CDD" id="cd01335">
    <property type="entry name" value="Radical_SAM"/>
    <property type="match status" value="1"/>
</dbReference>
<dbReference type="FunFam" id="1.10.150.530:FF:000003">
    <property type="entry name" value="Dual-specificity RNA methyltransferase RlmN"/>
    <property type="match status" value="1"/>
</dbReference>
<dbReference type="FunFam" id="3.20.20.70:FF:000008">
    <property type="entry name" value="Dual-specificity RNA methyltransferase RlmN"/>
    <property type="match status" value="1"/>
</dbReference>
<dbReference type="Gene3D" id="1.10.150.530">
    <property type="match status" value="1"/>
</dbReference>
<dbReference type="Gene3D" id="3.20.20.70">
    <property type="entry name" value="Aldolase class I"/>
    <property type="match status" value="1"/>
</dbReference>
<dbReference type="HAMAP" id="MF_01849">
    <property type="entry name" value="RNA_methyltr_RlmN"/>
    <property type="match status" value="1"/>
</dbReference>
<dbReference type="InterPro" id="IPR013785">
    <property type="entry name" value="Aldolase_TIM"/>
</dbReference>
<dbReference type="InterPro" id="IPR040072">
    <property type="entry name" value="Methyltransferase_A"/>
</dbReference>
<dbReference type="InterPro" id="IPR048641">
    <property type="entry name" value="RlmN_N"/>
</dbReference>
<dbReference type="InterPro" id="IPR027492">
    <property type="entry name" value="RNA_MTrfase_RlmN"/>
</dbReference>
<dbReference type="InterPro" id="IPR004383">
    <property type="entry name" value="rRNA_lsu_MTrfase_RlmN/Cfr"/>
</dbReference>
<dbReference type="InterPro" id="IPR007197">
    <property type="entry name" value="rSAM"/>
</dbReference>
<dbReference type="NCBIfam" id="TIGR00048">
    <property type="entry name" value="rRNA_mod_RlmN"/>
    <property type="match status" value="1"/>
</dbReference>
<dbReference type="PANTHER" id="PTHR30544">
    <property type="entry name" value="23S RRNA METHYLTRANSFERASE"/>
    <property type="match status" value="1"/>
</dbReference>
<dbReference type="PANTHER" id="PTHR30544:SF5">
    <property type="entry name" value="RADICAL SAM CORE DOMAIN-CONTAINING PROTEIN"/>
    <property type="match status" value="1"/>
</dbReference>
<dbReference type="Pfam" id="PF04055">
    <property type="entry name" value="Radical_SAM"/>
    <property type="match status" value="1"/>
</dbReference>
<dbReference type="Pfam" id="PF21016">
    <property type="entry name" value="RlmN_N"/>
    <property type="match status" value="1"/>
</dbReference>
<dbReference type="PIRSF" id="PIRSF006004">
    <property type="entry name" value="CHP00048"/>
    <property type="match status" value="1"/>
</dbReference>
<dbReference type="SFLD" id="SFLDF00275">
    <property type="entry name" value="adenosine_C2_methyltransferase"/>
    <property type="match status" value="1"/>
</dbReference>
<dbReference type="SFLD" id="SFLDG01062">
    <property type="entry name" value="methyltransferase_(Class_A)"/>
    <property type="match status" value="1"/>
</dbReference>
<dbReference type="SUPFAM" id="SSF102114">
    <property type="entry name" value="Radical SAM enzymes"/>
    <property type="match status" value="1"/>
</dbReference>
<dbReference type="PROSITE" id="PS51918">
    <property type="entry name" value="RADICAL_SAM"/>
    <property type="match status" value="1"/>
</dbReference>
<organism>
    <name type="scientific">Xanthomonas oryzae pv. oryzae (strain KACC10331 / KXO85)</name>
    <dbReference type="NCBI Taxonomy" id="291331"/>
    <lineage>
        <taxon>Bacteria</taxon>
        <taxon>Pseudomonadati</taxon>
        <taxon>Pseudomonadota</taxon>
        <taxon>Gammaproteobacteria</taxon>
        <taxon>Lysobacterales</taxon>
        <taxon>Lysobacteraceae</taxon>
        <taxon>Xanthomonas</taxon>
    </lineage>
</organism>
<keyword id="KW-0004">4Fe-4S</keyword>
<keyword id="KW-0963">Cytoplasm</keyword>
<keyword id="KW-1015">Disulfide bond</keyword>
<keyword id="KW-0408">Iron</keyword>
<keyword id="KW-0411">Iron-sulfur</keyword>
<keyword id="KW-0479">Metal-binding</keyword>
<keyword id="KW-0489">Methyltransferase</keyword>
<keyword id="KW-1185">Reference proteome</keyword>
<keyword id="KW-0698">rRNA processing</keyword>
<keyword id="KW-0949">S-adenosyl-L-methionine</keyword>
<keyword id="KW-0808">Transferase</keyword>
<keyword id="KW-0819">tRNA processing</keyword>
<protein>
    <recommendedName>
        <fullName evidence="1">Dual-specificity RNA methyltransferase RlmN</fullName>
        <ecNumber evidence="1">2.1.1.192</ecNumber>
    </recommendedName>
    <alternativeName>
        <fullName evidence="1">23S rRNA (adenine(2503)-C(2))-methyltransferase</fullName>
    </alternativeName>
    <alternativeName>
        <fullName evidence="1">23S rRNA m2A2503 methyltransferase</fullName>
    </alternativeName>
    <alternativeName>
        <fullName evidence="1">Ribosomal RNA large subunit methyltransferase N</fullName>
    </alternativeName>
    <alternativeName>
        <fullName evidence="1">tRNA (adenine(37)-C(2))-methyltransferase</fullName>
    </alternativeName>
    <alternativeName>
        <fullName evidence="1">tRNA m2A37 methyltransferase</fullName>
    </alternativeName>
</protein>
<gene>
    <name evidence="1" type="primary">rlmN</name>
    <name type="ordered locus">XOO2534</name>
</gene>
<accession>Q5GZT3</accession>
<evidence type="ECO:0000255" key="1">
    <source>
        <dbReference type="HAMAP-Rule" id="MF_01849"/>
    </source>
</evidence>
<evidence type="ECO:0000255" key="2">
    <source>
        <dbReference type="PROSITE-ProRule" id="PRU01266"/>
    </source>
</evidence>
<proteinExistence type="inferred from homology"/>
<name>RLMN_XANOR</name>
<feature type="chain" id="PRO_0000350530" description="Dual-specificity RNA methyltransferase RlmN">
    <location>
        <begin position="1"/>
        <end position="401"/>
    </location>
</feature>
<feature type="domain" description="Radical SAM core" evidence="2">
    <location>
        <begin position="120"/>
        <end position="365"/>
    </location>
</feature>
<feature type="active site" description="Proton acceptor" evidence="1">
    <location>
        <position position="114"/>
    </location>
</feature>
<feature type="active site" description="S-methylcysteine intermediate" evidence="1">
    <location>
        <position position="370"/>
    </location>
</feature>
<feature type="binding site" evidence="1">
    <location>
        <position position="134"/>
    </location>
    <ligand>
        <name>[4Fe-4S] cluster</name>
        <dbReference type="ChEBI" id="CHEBI:49883"/>
        <note>4Fe-4S-S-AdoMet</note>
    </ligand>
</feature>
<feature type="binding site" evidence="1">
    <location>
        <position position="138"/>
    </location>
    <ligand>
        <name>[4Fe-4S] cluster</name>
        <dbReference type="ChEBI" id="CHEBI:49883"/>
        <note>4Fe-4S-S-AdoMet</note>
    </ligand>
</feature>
<feature type="binding site" evidence="1">
    <location>
        <position position="141"/>
    </location>
    <ligand>
        <name>[4Fe-4S] cluster</name>
        <dbReference type="ChEBI" id="CHEBI:49883"/>
        <note>4Fe-4S-S-AdoMet</note>
    </ligand>
</feature>
<feature type="binding site" evidence="1">
    <location>
        <begin position="187"/>
        <end position="188"/>
    </location>
    <ligand>
        <name>S-adenosyl-L-methionine</name>
        <dbReference type="ChEBI" id="CHEBI:59789"/>
    </ligand>
</feature>
<feature type="binding site" evidence="1">
    <location>
        <position position="219"/>
    </location>
    <ligand>
        <name>S-adenosyl-L-methionine</name>
        <dbReference type="ChEBI" id="CHEBI:59789"/>
    </ligand>
</feature>
<feature type="binding site" evidence="1">
    <location>
        <begin position="241"/>
        <end position="243"/>
    </location>
    <ligand>
        <name>S-adenosyl-L-methionine</name>
        <dbReference type="ChEBI" id="CHEBI:59789"/>
    </ligand>
</feature>
<feature type="binding site" evidence="1">
    <location>
        <position position="327"/>
    </location>
    <ligand>
        <name>S-adenosyl-L-methionine</name>
        <dbReference type="ChEBI" id="CHEBI:59789"/>
    </ligand>
</feature>
<feature type="disulfide bond" description="(transient)" evidence="1">
    <location>
        <begin position="127"/>
        <end position="370"/>
    </location>
</feature>
<sequence>MNEVVIPSVLQDVPVRTSEPRKQNLLDLDREGLERFFADTLGEARYRAHQVMKWIHHRYVTDFDHMTDLGKALRAKLHQHAEVLVPNVVFDKPSTDGTHKWLLAMGTDGKNAIETVYIPDKGRGTLCVSSQVGCGLNCSFCSTATQGFNRNLTTAEIIGQVWVAARHLGNVPHQQRRLTNVVMMGMGEPLMNFDNVVRAMSVMRDDLGYGLASKRVTLSTSGLVPMIDRLSTESDVSLAVSLHAANDALRETLVPLNKKYPIAELMESCARYLRGSKKRDSVTFEYTLMKGINDQPEHARQLARLMRQFDNAVQSKDAGKVNLIPFNPFPGTRYERSGETEIRAFQKILLDAQVLTIVRRTRGDDIDAACGQLKGQVMDRTRRQAEFRRTLEGQADRDAAA</sequence>